<proteinExistence type="inferred from homology"/>
<protein>
    <recommendedName>
        <fullName evidence="1">Dihydroorotase</fullName>
        <shortName evidence="1">DHOase</shortName>
        <ecNumber evidence="1">3.5.2.3</ecNumber>
    </recommendedName>
</protein>
<organism>
    <name type="scientific">Acidovorax sp. (strain JS42)</name>
    <dbReference type="NCBI Taxonomy" id="232721"/>
    <lineage>
        <taxon>Bacteria</taxon>
        <taxon>Pseudomonadati</taxon>
        <taxon>Pseudomonadota</taxon>
        <taxon>Betaproteobacteria</taxon>
        <taxon>Burkholderiales</taxon>
        <taxon>Comamonadaceae</taxon>
        <taxon>Acidovorax</taxon>
    </lineage>
</organism>
<name>PYRC_ACISJ</name>
<accession>A1WC79</accession>
<keyword id="KW-0378">Hydrolase</keyword>
<keyword id="KW-0479">Metal-binding</keyword>
<keyword id="KW-0665">Pyrimidine biosynthesis</keyword>
<keyword id="KW-0862">Zinc</keyword>
<evidence type="ECO:0000255" key="1">
    <source>
        <dbReference type="HAMAP-Rule" id="MF_00219"/>
    </source>
</evidence>
<sequence>MTATTDTLTITRPDDWHLHVRDGEPLRTVVPHTAAQFGRAIIMPNLRPPVTTAQQAAEYKQRILAAVPEGVAFEPLMTLYLTDNLPPDEIARARDAGVVAAKLYPAGATTNSDAGVTDLRKTYKTLEAMQKAGLLLLVHGEVTSSDIDLFDREAVFIEQQLIPLRRHFPELKIVFEHITTKEAAQYVKEAGRFTAATITAHHLLYNRNAIFTGGIRPHYYCLPVLKREVHRQALVQAATSGSDKFFLGTDSAPHPAHLKEHATGCAGCYTAHAAIEMYAEAFDNAGALDKLEGFASVHGPAFYGLPRNTGTVTLRRESWTPPDSFAFGEAALKPLRAGEALPWRLVA</sequence>
<gene>
    <name evidence="1" type="primary">pyrC</name>
    <name type="ordered locus">Ajs_3745</name>
</gene>
<reference key="1">
    <citation type="submission" date="2006-12" db="EMBL/GenBank/DDBJ databases">
        <title>Complete sequence of chromosome 1 of Acidovorax sp. JS42.</title>
        <authorList>
            <person name="Copeland A."/>
            <person name="Lucas S."/>
            <person name="Lapidus A."/>
            <person name="Barry K."/>
            <person name="Detter J.C."/>
            <person name="Glavina del Rio T."/>
            <person name="Dalin E."/>
            <person name="Tice H."/>
            <person name="Pitluck S."/>
            <person name="Chertkov O."/>
            <person name="Brettin T."/>
            <person name="Bruce D."/>
            <person name="Han C."/>
            <person name="Tapia R."/>
            <person name="Gilna P."/>
            <person name="Schmutz J."/>
            <person name="Larimer F."/>
            <person name="Land M."/>
            <person name="Hauser L."/>
            <person name="Kyrpides N."/>
            <person name="Kim E."/>
            <person name="Stahl D."/>
            <person name="Richardson P."/>
        </authorList>
    </citation>
    <scope>NUCLEOTIDE SEQUENCE [LARGE SCALE GENOMIC DNA]</scope>
    <source>
        <strain>JS42</strain>
    </source>
</reference>
<dbReference type="EC" id="3.5.2.3" evidence="1"/>
<dbReference type="EMBL" id="CP000539">
    <property type="protein sequence ID" value="ABM43854.1"/>
    <property type="molecule type" value="Genomic_DNA"/>
</dbReference>
<dbReference type="SMR" id="A1WC79"/>
<dbReference type="STRING" id="232721.Ajs_3745"/>
<dbReference type="MEROPS" id="M38.A02"/>
<dbReference type="KEGG" id="ajs:Ajs_3745"/>
<dbReference type="eggNOG" id="COG0418">
    <property type="taxonomic scope" value="Bacteria"/>
</dbReference>
<dbReference type="HOGENOM" id="CLU_041558_1_0_4"/>
<dbReference type="UniPathway" id="UPA00070">
    <property type="reaction ID" value="UER00117"/>
</dbReference>
<dbReference type="Proteomes" id="UP000000645">
    <property type="component" value="Chromosome"/>
</dbReference>
<dbReference type="GO" id="GO:0005829">
    <property type="term" value="C:cytosol"/>
    <property type="evidence" value="ECO:0007669"/>
    <property type="project" value="TreeGrafter"/>
</dbReference>
<dbReference type="GO" id="GO:0004151">
    <property type="term" value="F:dihydroorotase activity"/>
    <property type="evidence" value="ECO:0007669"/>
    <property type="project" value="UniProtKB-UniRule"/>
</dbReference>
<dbReference type="GO" id="GO:0008270">
    <property type="term" value="F:zinc ion binding"/>
    <property type="evidence" value="ECO:0007669"/>
    <property type="project" value="UniProtKB-UniRule"/>
</dbReference>
<dbReference type="GO" id="GO:0006207">
    <property type="term" value="P:'de novo' pyrimidine nucleobase biosynthetic process"/>
    <property type="evidence" value="ECO:0007669"/>
    <property type="project" value="TreeGrafter"/>
</dbReference>
<dbReference type="GO" id="GO:0044205">
    <property type="term" value="P:'de novo' UMP biosynthetic process"/>
    <property type="evidence" value="ECO:0007669"/>
    <property type="project" value="UniProtKB-UniRule"/>
</dbReference>
<dbReference type="CDD" id="cd01294">
    <property type="entry name" value="DHOase"/>
    <property type="match status" value="1"/>
</dbReference>
<dbReference type="FunFam" id="3.20.20.140:FF:000006">
    <property type="entry name" value="Dihydroorotase"/>
    <property type="match status" value="1"/>
</dbReference>
<dbReference type="Gene3D" id="3.20.20.140">
    <property type="entry name" value="Metal-dependent hydrolases"/>
    <property type="match status" value="1"/>
</dbReference>
<dbReference type="HAMAP" id="MF_00219">
    <property type="entry name" value="PyrC_classII"/>
    <property type="match status" value="1"/>
</dbReference>
<dbReference type="InterPro" id="IPR006680">
    <property type="entry name" value="Amidohydro-rel"/>
</dbReference>
<dbReference type="InterPro" id="IPR004721">
    <property type="entry name" value="DHOdimr"/>
</dbReference>
<dbReference type="InterPro" id="IPR002195">
    <property type="entry name" value="Dihydroorotase_CS"/>
</dbReference>
<dbReference type="InterPro" id="IPR032466">
    <property type="entry name" value="Metal_Hydrolase"/>
</dbReference>
<dbReference type="NCBIfam" id="TIGR00856">
    <property type="entry name" value="pyrC_dimer"/>
    <property type="match status" value="1"/>
</dbReference>
<dbReference type="PANTHER" id="PTHR43137">
    <property type="entry name" value="DIHYDROOROTASE"/>
    <property type="match status" value="1"/>
</dbReference>
<dbReference type="PANTHER" id="PTHR43137:SF1">
    <property type="entry name" value="DIHYDROOROTASE"/>
    <property type="match status" value="1"/>
</dbReference>
<dbReference type="Pfam" id="PF01979">
    <property type="entry name" value="Amidohydro_1"/>
    <property type="match status" value="1"/>
</dbReference>
<dbReference type="PIRSF" id="PIRSF001237">
    <property type="entry name" value="DHOdimr"/>
    <property type="match status" value="1"/>
</dbReference>
<dbReference type="SUPFAM" id="SSF51556">
    <property type="entry name" value="Metallo-dependent hydrolases"/>
    <property type="match status" value="1"/>
</dbReference>
<dbReference type="PROSITE" id="PS00482">
    <property type="entry name" value="DIHYDROOROTASE_1"/>
    <property type="match status" value="1"/>
</dbReference>
<dbReference type="PROSITE" id="PS00483">
    <property type="entry name" value="DIHYDROOROTASE_2"/>
    <property type="match status" value="1"/>
</dbReference>
<comment type="function">
    <text evidence="1">Catalyzes the reversible cyclization of carbamoyl aspartate to dihydroorotate.</text>
</comment>
<comment type="catalytic activity">
    <reaction evidence="1">
        <text>(S)-dihydroorotate + H2O = N-carbamoyl-L-aspartate + H(+)</text>
        <dbReference type="Rhea" id="RHEA:24296"/>
        <dbReference type="ChEBI" id="CHEBI:15377"/>
        <dbReference type="ChEBI" id="CHEBI:15378"/>
        <dbReference type="ChEBI" id="CHEBI:30864"/>
        <dbReference type="ChEBI" id="CHEBI:32814"/>
        <dbReference type="EC" id="3.5.2.3"/>
    </reaction>
</comment>
<comment type="cofactor">
    <cofactor evidence="1">
        <name>Zn(2+)</name>
        <dbReference type="ChEBI" id="CHEBI:29105"/>
    </cofactor>
    <text evidence="1">Binds 2 Zn(2+) ions per subunit.</text>
</comment>
<comment type="pathway">
    <text evidence="1">Pyrimidine metabolism; UMP biosynthesis via de novo pathway; (S)-dihydroorotate from bicarbonate: step 3/3.</text>
</comment>
<comment type="subunit">
    <text evidence="1">Homodimer.</text>
</comment>
<comment type="similarity">
    <text evidence="1">Belongs to the metallo-dependent hydrolases superfamily. DHOase family. Class II DHOase subfamily.</text>
</comment>
<feature type="chain" id="PRO_0000325566" description="Dihydroorotase">
    <location>
        <begin position="1"/>
        <end position="347"/>
    </location>
</feature>
<feature type="active site" evidence="1">
    <location>
        <position position="250"/>
    </location>
</feature>
<feature type="binding site" evidence="1">
    <location>
        <position position="17"/>
    </location>
    <ligand>
        <name>Zn(2+)</name>
        <dbReference type="ChEBI" id="CHEBI:29105"/>
        <label>1</label>
    </ligand>
</feature>
<feature type="binding site" evidence="1">
    <location>
        <begin position="19"/>
        <end position="21"/>
    </location>
    <ligand>
        <name>substrate</name>
    </ligand>
</feature>
<feature type="binding site" evidence="1">
    <location>
        <position position="19"/>
    </location>
    <ligand>
        <name>Zn(2+)</name>
        <dbReference type="ChEBI" id="CHEBI:29105"/>
        <label>1</label>
    </ligand>
</feature>
<feature type="binding site" evidence="1">
    <location>
        <position position="45"/>
    </location>
    <ligand>
        <name>substrate</name>
    </ligand>
</feature>
<feature type="binding site" description="via carbamate group" evidence="1">
    <location>
        <position position="102"/>
    </location>
    <ligand>
        <name>Zn(2+)</name>
        <dbReference type="ChEBI" id="CHEBI:29105"/>
        <label>1</label>
    </ligand>
</feature>
<feature type="binding site" description="via carbamate group" evidence="1">
    <location>
        <position position="102"/>
    </location>
    <ligand>
        <name>Zn(2+)</name>
        <dbReference type="ChEBI" id="CHEBI:29105"/>
        <label>2</label>
    </ligand>
</feature>
<feature type="binding site" evidence="1">
    <location>
        <position position="139"/>
    </location>
    <ligand>
        <name>substrate</name>
    </ligand>
</feature>
<feature type="binding site" evidence="1">
    <location>
        <position position="139"/>
    </location>
    <ligand>
        <name>Zn(2+)</name>
        <dbReference type="ChEBI" id="CHEBI:29105"/>
        <label>2</label>
    </ligand>
</feature>
<feature type="binding site" evidence="1">
    <location>
        <position position="177"/>
    </location>
    <ligand>
        <name>Zn(2+)</name>
        <dbReference type="ChEBI" id="CHEBI:29105"/>
        <label>2</label>
    </ligand>
</feature>
<feature type="binding site" evidence="1">
    <location>
        <position position="222"/>
    </location>
    <ligand>
        <name>substrate</name>
    </ligand>
</feature>
<feature type="binding site" evidence="1">
    <location>
        <position position="250"/>
    </location>
    <ligand>
        <name>Zn(2+)</name>
        <dbReference type="ChEBI" id="CHEBI:29105"/>
        <label>1</label>
    </ligand>
</feature>
<feature type="binding site" evidence="1">
    <location>
        <position position="254"/>
    </location>
    <ligand>
        <name>substrate</name>
    </ligand>
</feature>
<feature type="binding site" evidence="1">
    <location>
        <position position="266"/>
    </location>
    <ligand>
        <name>substrate</name>
    </ligand>
</feature>
<feature type="modified residue" description="N6-carboxylysine" evidence="1">
    <location>
        <position position="102"/>
    </location>
</feature>